<reference key="1">
    <citation type="journal article" date="2005" name="Proc. Natl. Acad. Sci. U.S.A.">
        <title>Whole genome sequence of Staphylococcus saprophyticus reveals the pathogenesis of uncomplicated urinary tract infection.</title>
        <authorList>
            <person name="Kuroda M."/>
            <person name="Yamashita A."/>
            <person name="Hirakawa H."/>
            <person name="Kumano M."/>
            <person name="Morikawa K."/>
            <person name="Higashide M."/>
            <person name="Maruyama A."/>
            <person name="Inose Y."/>
            <person name="Matoba K."/>
            <person name="Toh H."/>
            <person name="Kuhara S."/>
            <person name="Hattori M."/>
            <person name="Ohta T."/>
        </authorList>
    </citation>
    <scope>NUCLEOTIDE SEQUENCE [LARGE SCALE GENOMIC DNA]</scope>
    <source>
        <strain>ATCC 15305 / DSM 20229 / NCIMB 8711 / NCTC 7292 / S-41</strain>
    </source>
</reference>
<accession>Q49XK7</accession>
<dbReference type="EMBL" id="AP008934">
    <property type="protein sequence ID" value="BAE18490.1"/>
    <property type="molecule type" value="Genomic_DNA"/>
</dbReference>
<dbReference type="RefSeq" id="WP_011303125.1">
    <property type="nucleotide sequence ID" value="NZ_MTGA01000038.1"/>
</dbReference>
<dbReference type="SMR" id="Q49XK7"/>
<dbReference type="GeneID" id="3616683"/>
<dbReference type="KEGG" id="ssp:SSP1345"/>
<dbReference type="PATRIC" id="fig|342451.11.peg.1349"/>
<dbReference type="eggNOG" id="COG3853">
    <property type="taxonomic scope" value="Bacteria"/>
</dbReference>
<dbReference type="HOGENOM" id="CLU_032111_0_0_9"/>
<dbReference type="OrthoDB" id="9768858at2"/>
<dbReference type="Proteomes" id="UP000006371">
    <property type="component" value="Chromosome"/>
</dbReference>
<dbReference type="InterPro" id="IPR008863">
    <property type="entry name" value="Toxic_anion-R_TelA"/>
</dbReference>
<dbReference type="PANTHER" id="PTHR38432">
    <property type="entry name" value="TELA-LIKE PROTEIN SAOUHSC_01408"/>
    <property type="match status" value="1"/>
</dbReference>
<dbReference type="PANTHER" id="PTHR38432:SF1">
    <property type="entry name" value="TELA-LIKE PROTEIN SAOUHSC_01408"/>
    <property type="match status" value="1"/>
</dbReference>
<dbReference type="Pfam" id="PF05816">
    <property type="entry name" value="TelA"/>
    <property type="match status" value="1"/>
</dbReference>
<dbReference type="PIRSF" id="PIRSF026508">
    <property type="entry name" value="TelA"/>
    <property type="match status" value="1"/>
</dbReference>
<gene>
    <name type="ordered locus">SSP1345</name>
</gene>
<feature type="chain" id="PRO_0000281406" description="TelA-like protein SSP1345">
    <location>
        <begin position="1"/>
        <end position="377"/>
    </location>
</feature>
<feature type="region of interest" description="Disordered" evidence="1">
    <location>
        <begin position="1"/>
        <end position="39"/>
    </location>
</feature>
<feature type="compositionally biased region" description="Basic and acidic residues" evidence="1">
    <location>
        <begin position="1"/>
        <end position="18"/>
    </location>
</feature>
<feature type="compositionally biased region" description="Polar residues" evidence="1">
    <location>
        <begin position="20"/>
        <end position="34"/>
    </location>
</feature>
<protein>
    <recommendedName>
        <fullName>TelA-like protein SSP1345</fullName>
    </recommendedName>
</protein>
<evidence type="ECO:0000256" key="1">
    <source>
        <dbReference type="SAM" id="MobiDB-lite"/>
    </source>
</evidence>
<evidence type="ECO:0000305" key="2"/>
<sequence>MAREQDSINSHPLDKYIDENSANESEIIKSSSQFSHEDQQKIDKLSKQIKPMDNDGLLNYGTEAQSNMSQFSHRILNEVKTTDVGPVGDSLNGLMSKLKSVNPEELNPENQSKLKRIFKRTKASVNEIFSKMQSVGSQIDRISIELDKHKNNLKKDIDMLDELYDMNKDYFDELSIYIEAAKHKQYVLQQDEIPKLREQAKSTGNQMDVQAASDMEQFVDRLDKRIYDLQLSRQIAIQTAPQIRMIQNVNQALAEKIQSSILTSIPLWKNQMSIALTLMRQRNAVSAQKAVTDTTNDLLLKNSELLKQNALATATENERGVVDIETLKTTQKDIIETIEQTLQIQEHGRTKRKQAESELNELETELQNQLLDMKENK</sequence>
<keyword id="KW-1185">Reference proteome</keyword>
<name>TELL_STAS1</name>
<comment type="similarity">
    <text evidence="2">Belongs to the TelA family.</text>
</comment>
<organism>
    <name type="scientific">Staphylococcus saprophyticus subsp. saprophyticus (strain ATCC 15305 / DSM 20229 / NCIMB 8711 / NCTC 7292 / S-41)</name>
    <dbReference type="NCBI Taxonomy" id="342451"/>
    <lineage>
        <taxon>Bacteria</taxon>
        <taxon>Bacillati</taxon>
        <taxon>Bacillota</taxon>
        <taxon>Bacilli</taxon>
        <taxon>Bacillales</taxon>
        <taxon>Staphylococcaceae</taxon>
        <taxon>Staphylococcus</taxon>
    </lineage>
</organism>
<proteinExistence type="inferred from homology"/>